<feature type="signal peptide" evidence="2 3">
    <location>
        <begin position="1"/>
        <end position="21"/>
    </location>
</feature>
<feature type="chain" id="PRO_0000017870" description="Epididymal secretory protein 4">
    <location>
        <begin position="22"/>
        <end position="172"/>
    </location>
</feature>
<feature type="disulfide bond" evidence="1">
    <location>
        <begin position="82"/>
        <end position="167"/>
    </location>
</feature>
<dbReference type="EMBL" id="X71356">
    <property type="protein sequence ID" value="CAA50491.1"/>
    <property type="molecule type" value="mRNA"/>
</dbReference>
<dbReference type="EMBL" id="X63151">
    <property type="protein sequence ID" value="CAA44854.1"/>
    <property type="molecule type" value="mRNA"/>
</dbReference>
<dbReference type="PIR" id="A46695">
    <property type="entry name" value="A46695"/>
</dbReference>
<dbReference type="SMR" id="P35578"/>
<dbReference type="GO" id="GO:0005576">
    <property type="term" value="C:extracellular region"/>
    <property type="evidence" value="ECO:0007669"/>
    <property type="project" value="UniProtKB-SubCell"/>
</dbReference>
<dbReference type="GO" id="GO:0036094">
    <property type="term" value="F:small molecule binding"/>
    <property type="evidence" value="ECO:0007669"/>
    <property type="project" value="InterPro"/>
</dbReference>
<dbReference type="Gene3D" id="2.40.128.20">
    <property type="match status" value="1"/>
</dbReference>
<dbReference type="InterPro" id="IPR012674">
    <property type="entry name" value="Calycin"/>
</dbReference>
<dbReference type="InterPro" id="IPR002345">
    <property type="entry name" value="Lipocalin"/>
</dbReference>
<dbReference type="InterPro" id="IPR000566">
    <property type="entry name" value="Lipocln_cytosolic_FA-bd_dom"/>
</dbReference>
<dbReference type="PANTHER" id="PTHR11430:SF32">
    <property type="entry name" value="CHLOROPLASTIC LIPOCALIN"/>
    <property type="match status" value="1"/>
</dbReference>
<dbReference type="PANTHER" id="PTHR11430">
    <property type="entry name" value="LIPOCALIN"/>
    <property type="match status" value="1"/>
</dbReference>
<dbReference type="Pfam" id="PF00061">
    <property type="entry name" value="Lipocalin"/>
    <property type="match status" value="1"/>
</dbReference>
<dbReference type="PRINTS" id="PR00179">
    <property type="entry name" value="LIPOCALIN"/>
</dbReference>
<dbReference type="SUPFAM" id="SSF50814">
    <property type="entry name" value="Lipocalins"/>
    <property type="match status" value="1"/>
</dbReference>
<comment type="function">
    <text>Could transport small hydrophobic molecules into the epididymal fluid during the sperm maturation. Binds to the head region of spermatozoa and plays a key role in sperm maturation.</text>
</comment>
<comment type="subcellular location">
    <subcellularLocation>
        <location>Secreted</location>
        <location>Extracellular space</location>
    </subcellularLocation>
</comment>
<comment type="tissue specificity">
    <text>Secreted by the epididymal epithelial cells.</text>
</comment>
<comment type="developmental stage">
    <text>Synthesized during the reproductive cycle.</text>
</comment>
<comment type="similarity">
    <text evidence="4">Belongs to the calycin superfamily. Lipocalin family.</text>
</comment>
<keyword id="KW-0903">Direct protein sequencing</keyword>
<keyword id="KW-1015">Disulfide bond</keyword>
<keyword id="KW-0964">Secreted</keyword>
<keyword id="KW-0732">Signal</keyword>
<keyword id="KW-0813">Transport</keyword>
<organism>
    <name type="scientific">Zootoca vivipara</name>
    <name type="common">Common lizard</name>
    <name type="synonym">Lacerta vivipara</name>
    <dbReference type="NCBI Taxonomy" id="8524"/>
    <lineage>
        <taxon>Eukaryota</taxon>
        <taxon>Metazoa</taxon>
        <taxon>Chordata</taxon>
        <taxon>Craniata</taxon>
        <taxon>Vertebrata</taxon>
        <taxon>Euteleostomi</taxon>
        <taxon>Lepidosauria</taxon>
        <taxon>Squamata</taxon>
        <taxon>Bifurcata</taxon>
        <taxon>Unidentata</taxon>
        <taxon>Episquamata</taxon>
        <taxon>Laterata</taxon>
        <taxon>Lacertibaenia</taxon>
        <taxon>Lacertidae</taxon>
        <taxon>Zootoca</taxon>
    </lineage>
</organism>
<name>ESP4_ZOOVI</name>
<accession>P35578</accession>
<proteinExistence type="evidence at protein level"/>
<evidence type="ECO:0000250" key="1"/>
<evidence type="ECO:0000269" key="2">
    <source>
    </source>
</evidence>
<evidence type="ECO:0000269" key="3">
    <source>
    </source>
</evidence>
<evidence type="ECO:0000305" key="4"/>
<protein>
    <recommendedName>
        <fullName>Epididymal secretory protein 4</fullName>
    </recommendedName>
    <alternativeName>
        <fullName>C731</fullName>
    </alternativeName>
    <alternativeName>
        <fullName>Epididymal secretory protein IV</fullName>
    </alternativeName>
    <alternativeName>
        <fullName>LESP IV</fullName>
    </alternativeName>
</protein>
<sequence>MIAVLLLVFGMTPDYIFPVSADIPVVPNFDAQKTVGKWHPIGMASKLPEVPEYEQKISPMDHMVELTDGDMKLTANYMDGVCKEATAMLKHTDKPGVFKFTGGEIRMMDIDYEKYLIMYMKKSTFEAMYLSARGSDVGDDIKEKFKKLVLEQNFPEAHIKYFNAEQCTPTAA</sequence>
<reference key="1">
    <citation type="journal article" date="1991" name="Cell. Mol. Biol.">
        <title>Molecular cloning and characterization of a cDNA encoding for the mature form of a specific androgen dependent epididymal protein.</title>
        <authorList>
            <person name="Morel L."/>
            <person name="Depeiges A."/>
            <person name="Dufaure J.-P."/>
        </authorList>
    </citation>
    <scope>NUCLEOTIDE SEQUENCE [MRNA] OF 4-172</scope>
    <scope>PROTEIN SEQUENCE OF 22-34</scope>
    <source>
        <strain>Jacquin</strain>
        <tissue>Epididymis</tissue>
    </source>
</reference>
<reference key="2">
    <citation type="journal article" date="1993" name="J. Biol. Chem.">
        <title>LESP, an androgen-regulated lizard epididymal secretory protein family identified as a new member of the lipocalin superfamily.</title>
        <authorList>
            <person name="Morel L."/>
            <person name="Dufaure J.-P."/>
            <person name="Depeiges A."/>
        </authorList>
    </citation>
    <scope>NUCLEOTIDE SEQUENCE [MRNA]</scope>
    <scope>PROTEIN SEQUENCE OF 22-34</scope>
    <source>
        <strain>Jacquin</strain>
        <tissue>Epididymis</tissue>
    </source>
</reference>